<feature type="chain" id="PRO_1000215484" description="Phosphoglucosamine mutase">
    <location>
        <begin position="1"/>
        <end position="442"/>
    </location>
</feature>
<feature type="active site" description="Phosphoserine intermediate" evidence="1">
    <location>
        <position position="103"/>
    </location>
</feature>
<feature type="binding site" description="via phosphate group" evidence="1">
    <location>
        <position position="103"/>
    </location>
    <ligand>
        <name>Mg(2+)</name>
        <dbReference type="ChEBI" id="CHEBI:18420"/>
    </ligand>
</feature>
<feature type="binding site" evidence="1">
    <location>
        <position position="241"/>
    </location>
    <ligand>
        <name>Mg(2+)</name>
        <dbReference type="ChEBI" id="CHEBI:18420"/>
    </ligand>
</feature>
<feature type="binding site" evidence="1">
    <location>
        <position position="243"/>
    </location>
    <ligand>
        <name>Mg(2+)</name>
        <dbReference type="ChEBI" id="CHEBI:18420"/>
    </ligand>
</feature>
<feature type="binding site" evidence="1">
    <location>
        <position position="245"/>
    </location>
    <ligand>
        <name>Mg(2+)</name>
        <dbReference type="ChEBI" id="CHEBI:18420"/>
    </ligand>
</feature>
<feature type="modified residue" description="Phosphoserine" evidence="1">
    <location>
        <position position="103"/>
    </location>
</feature>
<sequence>MSERKYFGTDGVRAVAGEFPLTSAWVMSLGAAAGEVLRRVNPHARVVIGKDTRQSGDMLEAALAAGLTSRGVTVIHVGVLPTPGVSYLTRHLKADAGVVISASHNPYEDNGIKFFGADGQKLSDATELQIEAAIDEVPGFAPLTGTAMGSVTNYTEAEHLYTDFLKSHAPDLSGLKIALDCANGAAYRVAPKVFQAAGADVFAIYTTPDGRNINRGCGSTHMDHLRQIVREGEYDLGVAFDGDADRALFVDSRGQVVHGDHMLLLNARARGEQAVVATIMTNMALEAKLQDAGIPLERTAVGDRYVHERLHEKGLSLGGEQSGHVLFLDISPTGDGVLTALLTLASMKKLGTTLDALHDDLVMYPQTLVNVRVQDKKAIAVDQQVQQAVRQAEEQLLGRGRVNLRPSGTENLIRVMVEGQDAAEIHEVARVLAGVVEARGQA</sequence>
<keyword id="KW-0413">Isomerase</keyword>
<keyword id="KW-0460">Magnesium</keyword>
<keyword id="KW-0479">Metal-binding</keyword>
<keyword id="KW-0597">Phosphoprotein</keyword>
<keyword id="KW-1185">Reference proteome</keyword>
<organism>
    <name type="scientific">Deinococcus deserti (strain DSM 17065 / CIP 109153 / LMG 22923 / VCD115)</name>
    <dbReference type="NCBI Taxonomy" id="546414"/>
    <lineage>
        <taxon>Bacteria</taxon>
        <taxon>Thermotogati</taxon>
        <taxon>Deinococcota</taxon>
        <taxon>Deinococci</taxon>
        <taxon>Deinococcales</taxon>
        <taxon>Deinococcaceae</taxon>
        <taxon>Deinococcus</taxon>
    </lineage>
</organism>
<protein>
    <recommendedName>
        <fullName evidence="1">Phosphoglucosamine mutase</fullName>
        <ecNumber evidence="1">5.4.2.10</ecNumber>
    </recommendedName>
</protein>
<name>GLMM_DEIDV</name>
<dbReference type="EC" id="5.4.2.10" evidence="1"/>
<dbReference type="EMBL" id="CP001114">
    <property type="protein sequence ID" value="ACO46470.1"/>
    <property type="molecule type" value="Genomic_DNA"/>
</dbReference>
<dbReference type="RefSeq" id="WP_012693593.1">
    <property type="nucleotide sequence ID" value="NC_012526.1"/>
</dbReference>
<dbReference type="SMR" id="C1CWA3"/>
<dbReference type="STRING" id="546414.Deide_15140"/>
<dbReference type="PaxDb" id="546414-Deide_15140"/>
<dbReference type="KEGG" id="ddr:Deide_15140"/>
<dbReference type="eggNOG" id="COG1109">
    <property type="taxonomic scope" value="Bacteria"/>
</dbReference>
<dbReference type="HOGENOM" id="CLU_016950_7_0_0"/>
<dbReference type="OrthoDB" id="9806956at2"/>
<dbReference type="Proteomes" id="UP000002208">
    <property type="component" value="Chromosome"/>
</dbReference>
<dbReference type="GO" id="GO:0005829">
    <property type="term" value="C:cytosol"/>
    <property type="evidence" value="ECO:0007669"/>
    <property type="project" value="TreeGrafter"/>
</dbReference>
<dbReference type="GO" id="GO:0000287">
    <property type="term" value="F:magnesium ion binding"/>
    <property type="evidence" value="ECO:0007669"/>
    <property type="project" value="UniProtKB-UniRule"/>
</dbReference>
<dbReference type="GO" id="GO:0008966">
    <property type="term" value="F:phosphoglucosamine mutase activity"/>
    <property type="evidence" value="ECO:0007669"/>
    <property type="project" value="UniProtKB-UniRule"/>
</dbReference>
<dbReference type="GO" id="GO:0004615">
    <property type="term" value="F:phosphomannomutase activity"/>
    <property type="evidence" value="ECO:0007669"/>
    <property type="project" value="TreeGrafter"/>
</dbReference>
<dbReference type="GO" id="GO:0005975">
    <property type="term" value="P:carbohydrate metabolic process"/>
    <property type="evidence" value="ECO:0007669"/>
    <property type="project" value="InterPro"/>
</dbReference>
<dbReference type="GO" id="GO:0009252">
    <property type="term" value="P:peptidoglycan biosynthetic process"/>
    <property type="evidence" value="ECO:0007669"/>
    <property type="project" value="TreeGrafter"/>
</dbReference>
<dbReference type="GO" id="GO:0006048">
    <property type="term" value="P:UDP-N-acetylglucosamine biosynthetic process"/>
    <property type="evidence" value="ECO:0007669"/>
    <property type="project" value="TreeGrafter"/>
</dbReference>
<dbReference type="CDD" id="cd05802">
    <property type="entry name" value="GlmM"/>
    <property type="match status" value="1"/>
</dbReference>
<dbReference type="FunFam" id="3.30.310.50:FF:000001">
    <property type="entry name" value="Phosphoglucosamine mutase"/>
    <property type="match status" value="1"/>
</dbReference>
<dbReference type="FunFam" id="3.40.120.10:FF:000001">
    <property type="entry name" value="Phosphoglucosamine mutase"/>
    <property type="match status" value="1"/>
</dbReference>
<dbReference type="FunFam" id="3.40.120.10:FF:000003">
    <property type="entry name" value="Phosphoglucosamine mutase"/>
    <property type="match status" value="1"/>
</dbReference>
<dbReference type="Gene3D" id="3.40.120.10">
    <property type="entry name" value="Alpha-D-Glucose-1,6-Bisphosphate, subunit A, domain 3"/>
    <property type="match status" value="3"/>
</dbReference>
<dbReference type="Gene3D" id="3.30.310.50">
    <property type="entry name" value="Alpha-D-phosphohexomutase, C-terminal domain"/>
    <property type="match status" value="1"/>
</dbReference>
<dbReference type="HAMAP" id="MF_01554_B">
    <property type="entry name" value="GlmM_B"/>
    <property type="match status" value="1"/>
</dbReference>
<dbReference type="InterPro" id="IPR005844">
    <property type="entry name" value="A-D-PHexomutase_a/b/a-I"/>
</dbReference>
<dbReference type="InterPro" id="IPR016055">
    <property type="entry name" value="A-D-PHexomutase_a/b/a-I/II/III"/>
</dbReference>
<dbReference type="InterPro" id="IPR005845">
    <property type="entry name" value="A-D-PHexomutase_a/b/a-II"/>
</dbReference>
<dbReference type="InterPro" id="IPR005846">
    <property type="entry name" value="A-D-PHexomutase_a/b/a-III"/>
</dbReference>
<dbReference type="InterPro" id="IPR005843">
    <property type="entry name" value="A-D-PHexomutase_C"/>
</dbReference>
<dbReference type="InterPro" id="IPR036900">
    <property type="entry name" value="A-D-PHexomutase_C_sf"/>
</dbReference>
<dbReference type="InterPro" id="IPR016066">
    <property type="entry name" value="A-D-PHexomutase_CS"/>
</dbReference>
<dbReference type="InterPro" id="IPR005841">
    <property type="entry name" value="Alpha-D-phosphohexomutase_SF"/>
</dbReference>
<dbReference type="InterPro" id="IPR006352">
    <property type="entry name" value="GlmM_bact"/>
</dbReference>
<dbReference type="InterPro" id="IPR050060">
    <property type="entry name" value="Phosphoglucosamine_mutase"/>
</dbReference>
<dbReference type="NCBIfam" id="TIGR01455">
    <property type="entry name" value="glmM"/>
    <property type="match status" value="1"/>
</dbReference>
<dbReference type="NCBIfam" id="NF008139">
    <property type="entry name" value="PRK10887.1"/>
    <property type="match status" value="1"/>
</dbReference>
<dbReference type="PANTHER" id="PTHR42946:SF1">
    <property type="entry name" value="PHOSPHOGLUCOMUTASE (ALPHA-D-GLUCOSE-1,6-BISPHOSPHATE-DEPENDENT)"/>
    <property type="match status" value="1"/>
</dbReference>
<dbReference type="PANTHER" id="PTHR42946">
    <property type="entry name" value="PHOSPHOHEXOSE MUTASE"/>
    <property type="match status" value="1"/>
</dbReference>
<dbReference type="Pfam" id="PF02878">
    <property type="entry name" value="PGM_PMM_I"/>
    <property type="match status" value="1"/>
</dbReference>
<dbReference type="Pfam" id="PF02879">
    <property type="entry name" value="PGM_PMM_II"/>
    <property type="match status" value="1"/>
</dbReference>
<dbReference type="Pfam" id="PF02880">
    <property type="entry name" value="PGM_PMM_III"/>
    <property type="match status" value="1"/>
</dbReference>
<dbReference type="Pfam" id="PF00408">
    <property type="entry name" value="PGM_PMM_IV"/>
    <property type="match status" value="1"/>
</dbReference>
<dbReference type="PRINTS" id="PR00509">
    <property type="entry name" value="PGMPMM"/>
</dbReference>
<dbReference type="SUPFAM" id="SSF55957">
    <property type="entry name" value="Phosphoglucomutase, C-terminal domain"/>
    <property type="match status" value="1"/>
</dbReference>
<dbReference type="SUPFAM" id="SSF53738">
    <property type="entry name" value="Phosphoglucomutase, first 3 domains"/>
    <property type="match status" value="3"/>
</dbReference>
<dbReference type="PROSITE" id="PS00710">
    <property type="entry name" value="PGM_PMM"/>
    <property type="match status" value="1"/>
</dbReference>
<reference key="1">
    <citation type="journal article" date="2009" name="PLoS Genet.">
        <title>Alliance of proteomics and genomics to unravel the specificities of Sahara bacterium Deinococcus deserti.</title>
        <authorList>
            <person name="de Groot A."/>
            <person name="Dulermo R."/>
            <person name="Ortet P."/>
            <person name="Blanchard L."/>
            <person name="Guerin P."/>
            <person name="Fernandez B."/>
            <person name="Vacherie B."/>
            <person name="Dossat C."/>
            <person name="Jolivet E."/>
            <person name="Siguier P."/>
            <person name="Chandler M."/>
            <person name="Barakat M."/>
            <person name="Dedieu A."/>
            <person name="Barbe V."/>
            <person name="Heulin T."/>
            <person name="Sommer S."/>
            <person name="Achouak W."/>
            <person name="Armengaud J."/>
        </authorList>
    </citation>
    <scope>NUCLEOTIDE SEQUENCE [LARGE SCALE GENOMIC DNA]</scope>
    <source>
        <strain>DSM 17065 / CIP 109153 / LMG 22923 / VCD115</strain>
    </source>
</reference>
<proteinExistence type="inferred from homology"/>
<comment type="function">
    <text evidence="1">Catalyzes the conversion of glucosamine-6-phosphate to glucosamine-1-phosphate.</text>
</comment>
<comment type="catalytic activity">
    <reaction evidence="1">
        <text>alpha-D-glucosamine 1-phosphate = D-glucosamine 6-phosphate</text>
        <dbReference type="Rhea" id="RHEA:23424"/>
        <dbReference type="ChEBI" id="CHEBI:58516"/>
        <dbReference type="ChEBI" id="CHEBI:58725"/>
        <dbReference type="EC" id="5.4.2.10"/>
    </reaction>
</comment>
<comment type="cofactor">
    <cofactor evidence="1">
        <name>Mg(2+)</name>
        <dbReference type="ChEBI" id="CHEBI:18420"/>
    </cofactor>
    <text evidence="1">Binds 1 Mg(2+) ion per subunit.</text>
</comment>
<comment type="PTM">
    <text evidence="1">Activated by phosphorylation.</text>
</comment>
<comment type="similarity">
    <text evidence="1">Belongs to the phosphohexose mutase family.</text>
</comment>
<accession>C1CWA3</accession>
<gene>
    <name evidence="1" type="primary">glmM</name>
    <name type="ordered locus">Deide_15140</name>
</gene>
<evidence type="ECO:0000255" key="1">
    <source>
        <dbReference type="HAMAP-Rule" id="MF_01554"/>
    </source>
</evidence>